<comment type="function">
    <text evidence="1">Viral suppressor of RNA silencing which binds specifically to silencing RNAs (siRNAs). Acts as a molecular caliper to specifically select siRNAs based on the length of the duplex region of the RNA (By similarity).</text>
</comment>
<comment type="subunit">
    <text evidence="1">Homodimer.</text>
</comment>
<comment type="similarity">
    <text evidence="3">Belongs to the tombusvirus protein p19 family.</text>
</comment>
<feature type="chain" id="PRO_0000222884" description="RNA silencing suppressor p19">
    <location>
        <begin position="1"/>
        <end position="172"/>
    </location>
</feature>
<feature type="region of interest" description="Disordered" evidence="2">
    <location>
        <begin position="1"/>
        <end position="38"/>
    </location>
</feature>
<feature type="compositionally biased region" description="Basic and acidic residues" evidence="2">
    <location>
        <begin position="1"/>
        <end position="20"/>
    </location>
</feature>
<gene>
    <name type="ORF">ORF4</name>
</gene>
<dbReference type="EMBL" id="Z68899">
    <property type="protein sequence ID" value="CAA93132.1"/>
    <property type="molecule type" value="Genomic_RNA"/>
</dbReference>
<dbReference type="SMR" id="P50628"/>
<dbReference type="GO" id="GO:0044423">
    <property type="term" value="C:virion component"/>
    <property type="evidence" value="ECO:0007669"/>
    <property type="project" value="InterPro"/>
</dbReference>
<dbReference type="GO" id="GO:0003723">
    <property type="term" value="F:RNA binding"/>
    <property type="evidence" value="ECO:0007669"/>
    <property type="project" value="UniProtKB-KW"/>
</dbReference>
<dbReference type="GO" id="GO:0052170">
    <property type="term" value="P:symbiont-mediated suppression of host innate immune response"/>
    <property type="evidence" value="ECO:0007669"/>
    <property type="project" value="UniProtKB-KW"/>
</dbReference>
<dbReference type="Gene3D" id="3.30.390.180">
    <property type="entry name" value="RNA silencing suppressor P19"/>
    <property type="match status" value="1"/>
</dbReference>
<dbReference type="InterPro" id="IPR004905">
    <property type="entry name" value="Tombusvirus_p19"/>
</dbReference>
<dbReference type="InterPro" id="IPR036131">
    <property type="entry name" value="VP19_sf"/>
</dbReference>
<dbReference type="Pfam" id="PF03220">
    <property type="entry name" value="Tombus_P19"/>
    <property type="match status" value="1"/>
</dbReference>
<dbReference type="SUPFAM" id="SSF103145">
    <property type="entry name" value="Tombusvirus P19 core protein, VP19"/>
    <property type="match status" value="1"/>
</dbReference>
<name>P19_TBSVT</name>
<protein>
    <recommendedName>
        <fullName>RNA silencing suppressor p19</fullName>
    </recommendedName>
    <alternativeName>
        <fullName>19 kDa symptom severity modulator</fullName>
    </alternativeName>
</protein>
<organism>
    <name type="scientific">Tomato bushy stunt virus (strain type)</name>
    <name type="common">TBSV</name>
    <dbReference type="NCBI Taxonomy" id="70159"/>
    <lineage>
        <taxon>Viruses</taxon>
        <taxon>Riboviria</taxon>
        <taxon>Orthornavirae</taxon>
        <taxon>Kitrinoviricota</taxon>
        <taxon>Tolucaviricetes</taxon>
        <taxon>Tolivirales</taxon>
        <taxon>Tombusviridae</taxon>
        <taxon>Procedovirinae</taxon>
        <taxon>Tombusvirus</taxon>
        <taxon>Tombusvirus lycopersici</taxon>
    </lineage>
</organism>
<accession>P50628</accession>
<organismHost>
    <name type="scientific">Capsicum annuum</name>
    <name type="common">Capsicum pepper</name>
    <dbReference type="NCBI Taxonomy" id="4072"/>
</organismHost>
<organismHost>
    <name type="scientific">Malus</name>
    <dbReference type="NCBI Taxonomy" id="3749"/>
</organismHost>
<organismHost>
    <name type="scientific">Pyrus</name>
    <name type="common">pears</name>
    <dbReference type="NCBI Taxonomy" id="3766"/>
</organismHost>
<organismHost>
    <name type="scientific">Solanum lycopersicum</name>
    <name type="common">Tomato</name>
    <name type="synonym">Lycopersicon esculentum</name>
    <dbReference type="NCBI Taxonomy" id="4081"/>
</organismHost>
<organismHost>
    <name type="scientific">Solanum melongena</name>
    <name type="common">eggplant</name>
    <dbReference type="NCBI Taxonomy" id="4111"/>
</organismHost>
<organismHost>
    <name type="scientific">Tolmiea menziesii</name>
    <dbReference type="NCBI Taxonomy" id="29777"/>
</organismHost>
<organismHost>
    <name type="scientific">Tulipa</name>
    <dbReference type="NCBI Taxonomy" id="13305"/>
</organismHost>
<reference key="1">
    <citation type="journal article" date="1996" name="Phytopathology">
        <title>Different tomato bushy stunt virus strains cause disease outbreaks on solanaceous crops in Spain.</title>
        <authorList>
            <person name="Luis-Areteaga M."/>
            <person name="Rodriguez-Cerezo E."/>
            <person name="Fraile A."/>
            <person name="Saez E."/>
            <person name="Garcia-Arenal F."/>
        </authorList>
        <dbReference type="AGRICOLA" id="IND20581771"/>
    </citation>
    <scope>NUCLEOTIDE SEQUENCE [GENOMIC RNA]</scope>
</reference>
<keyword id="KW-0945">Host-virus interaction</keyword>
<keyword id="KW-1090">Inhibition of host innate immune response by virus</keyword>
<keyword id="KW-0694">RNA-binding</keyword>
<keyword id="KW-0941">Suppressor of RNA silencing</keyword>
<keyword id="KW-0899">Viral immunoevasion</keyword>
<sequence>MERAIQGNDAREQANSERWDGGSGSSTSPFQLPDESPSWTEWRLHNDETNSNQDNPLGFKESWGFGKVVFKRYLRYERTETSLHRVLGSWTGDSVNYAASRFFGVNQIGCTYSIRFRGVSVTISGGSRTLQHLCEMAIRSKQELLQLTPVEVESNVSRGCPEGVETFEEESE</sequence>
<evidence type="ECO:0000250" key="1"/>
<evidence type="ECO:0000256" key="2">
    <source>
        <dbReference type="SAM" id="MobiDB-lite"/>
    </source>
</evidence>
<evidence type="ECO:0000305" key="3"/>
<proteinExistence type="inferred from homology"/>